<evidence type="ECO:0000255" key="1">
    <source>
        <dbReference type="HAMAP-Rule" id="MF_00633"/>
    </source>
</evidence>
<feature type="chain" id="PRO_0000061831" description="Cytochrome b6">
    <location>
        <begin position="1"/>
        <end position="218"/>
    </location>
</feature>
<feature type="transmembrane region" description="Helical" evidence="1">
    <location>
        <begin position="35"/>
        <end position="55"/>
    </location>
</feature>
<feature type="transmembrane region" description="Helical" evidence="1">
    <location>
        <begin position="93"/>
        <end position="113"/>
    </location>
</feature>
<feature type="transmembrane region" description="Helical" evidence="1">
    <location>
        <begin position="119"/>
        <end position="139"/>
    </location>
</feature>
<feature type="transmembrane region" description="Helical" evidence="1">
    <location>
        <begin position="189"/>
        <end position="209"/>
    </location>
</feature>
<feature type="binding site" description="covalent" evidence="1">
    <location>
        <position position="38"/>
    </location>
    <ligand>
        <name>heme c</name>
        <dbReference type="ChEBI" id="CHEBI:61717"/>
    </ligand>
</feature>
<feature type="binding site" description="axial binding residue" evidence="1">
    <location>
        <position position="89"/>
    </location>
    <ligand>
        <name>heme b</name>
        <dbReference type="ChEBI" id="CHEBI:60344"/>
        <label>2</label>
    </ligand>
    <ligandPart>
        <name>Fe</name>
        <dbReference type="ChEBI" id="CHEBI:18248"/>
    </ligandPart>
</feature>
<feature type="binding site" description="axial binding residue" evidence="1">
    <location>
        <position position="103"/>
    </location>
    <ligand>
        <name>heme b</name>
        <dbReference type="ChEBI" id="CHEBI:60344"/>
        <label>1</label>
    </ligand>
    <ligandPart>
        <name>Fe</name>
        <dbReference type="ChEBI" id="CHEBI:18248"/>
    </ligandPart>
</feature>
<feature type="binding site" description="axial binding residue" evidence="1">
    <location>
        <position position="190"/>
    </location>
    <ligand>
        <name>heme b</name>
        <dbReference type="ChEBI" id="CHEBI:60344"/>
        <label>2</label>
    </ligand>
    <ligandPart>
        <name>Fe</name>
        <dbReference type="ChEBI" id="CHEBI:18248"/>
    </ligandPart>
</feature>
<feature type="binding site" description="axial binding residue" evidence="1">
    <location>
        <position position="205"/>
    </location>
    <ligand>
        <name>heme b</name>
        <dbReference type="ChEBI" id="CHEBI:60344"/>
        <label>1</label>
    </ligand>
    <ligandPart>
        <name>Fe</name>
        <dbReference type="ChEBI" id="CHEBI:18248"/>
    </ligandPart>
</feature>
<accession>Q7V5B9</accession>
<comment type="function">
    <text evidence="1">Component of the cytochrome b6-f complex, which mediates electron transfer between photosystem II (PSII) and photosystem I (PSI), cyclic electron flow around PSI, and state transitions.</text>
</comment>
<comment type="cofactor">
    <cofactor evidence="1">
        <name>heme b</name>
        <dbReference type="ChEBI" id="CHEBI:60344"/>
    </cofactor>
    <text evidence="1">Binds 2 heme b groups non-covalently with two histidine residues as axial ligands.</text>
</comment>
<comment type="cofactor">
    <cofactor evidence="1">
        <name>heme c</name>
        <dbReference type="ChEBI" id="CHEBI:61717"/>
    </cofactor>
    <text evidence="1">Binds one heme group covalently by a single cysteine link with no axial amino acid ligand. This heme was named heme ci.</text>
</comment>
<comment type="subunit">
    <text evidence="1">The 4 large subunits of the cytochrome b6-f complex are cytochrome b6, subunit IV (17 kDa polypeptide, PetD), cytochrome f and the Rieske protein, while the 4 small subunits are PetG, PetL, PetM and PetN. The complex functions as a dimer.</text>
</comment>
<comment type="subcellular location">
    <subcellularLocation>
        <location evidence="1">Cellular thylakoid membrane</location>
        <topology evidence="1">Multi-pass membrane protein</topology>
    </subcellularLocation>
</comment>
<comment type="miscellaneous">
    <text evidence="1">Heme 1 (or BH or b566) is high-potential and absorbs at about 566 nm, and heme 2 (or BL or b562) is low-potential and absorbs at about 562 nm.</text>
</comment>
<comment type="similarity">
    <text evidence="1">Belongs to the cytochrome b family. PetB subfamily.</text>
</comment>
<reference key="1">
    <citation type="journal article" date="2003" name="Nature">
        <title>Genome divergence in two Prochlorococcus ecotypes reflects oceanic niche differentiation.</title>
        <authorList>
            <person name="Rocap G."/>
            <person name="Larimer F.W."/>
            <person name="Lamerdin J.E."/>
            <person name="Malfatti S."/>
            <person name="Chain P."/>
            <person name="Ahlgren N.A."/>
            <person name="Arellano A."/>
            <person name="Coleman M."/>
            <person name="Hauser L."/>
            <person name="Hess W.R."/>
            <person name="Johnson Z.I."/>
            <person name="Land M.L."/>
            <person name="Lindell D."/>
            <person name="Post A.F."/>
            <person name="Regala W."/>
            <person name="Shah M."/>
            <person name="Shaw S.L."/>
            <person name="Steglich C."/>
            <person name="Sullivan M.B."/>
            <person name="Ting C.S."/>
            <person name="Tolonen A."/>
            <person name="Webb E.A."/>
            <person name="Zinser E.R."/>
            <person name="Chisholm S.W."/>
        </authorList>
    </citation>
    <scope>NUCLEOTIDE SEQUENCE [LARGE SCALE GENOMIC DNA]</scope>
    <source>
        <strain>MIT 9313</strain>
    </source>
</reference>
<sequence length="218" mass="24570">MTNSSPVYDWFQERLEIQAIADDVSSKYVPPHVNIFYCLGGITLVCFLVQFATGFAMTFYYKPTVTEAYSSVSYLMSDVSFGWLIRSVHRWSASMMVLMLILHVFRVYLTGGFKRPRELTWVTGVVMAVITVSFGVTGYSLPWDQVGYWAVKIVSGVPAAIPVVGDFMVELLRGGESVGQSTLTRFYSLHTFVLPWLLAVFMLMHFLMIRKQGISGPL</sequence>
<protein>
    <recommendedName>
        <fullName evidence="1">Cytochrome b6</fullName>
    </recommendedName>
</protein>
<dbReference type="EMBL" id="BX548175">
    <property type="protein sequence ID" value="CAE21824.1"/>
    <property type="molecule type" value="Genomic_DNA"/>
</dbReference>
<dbReference type="RefSeq" id="WP_011131016.1">
    <property type="nucleotide sequence ID" value="NC_005071.1"/>
</dbReference>
<dbReference type="SMR" id="Q7V5B9"/>
<dbReference type="KEGG" id="pmt:PMT_1649"/>
<dbReference type="eggNOG" id="COG1290">
    <property type="taxonomic scope" value="Bacteria"/>
</dbReference>
<dbReference type="HOGENOM" id="CLU_031114_0_2_3"/>
<dbReference type="OrthoDB" id="9804503at2"/>
<dbReference type="Proteomes" id="UP000001423">
    <property type="component" value="Chromosome"/>
</dbReference>
<dbReference type="GO" id="GO:0031676">
    <property type="term" value="C:plasma membrane-derived thylakoid membrane"/>
    <property type="evidence" value="ECO:0007669"/>
    <property type="project" value="UniProtKB-SubCell"/>
</dbReference>
<dbReference type="GO" id="GO:0045158">
    <property type="term" value="F:electron transporter, transferring electrons within cytochrome b6/f complex of photosystem II activity"/>
    <property type="evidence" value="ECO:0007669"/>
    <property type="project" value="UniProtKB-UniRule"/>
</dbReference>
<dbReference type="GO" id="GO:0046872">
    <property type="term" value="F:metal ion binding"/>
    <property type="evidence" value="ECO:0007669"/>
    <property type="project" value="UniProtKB-KW"/>
</dbReference>
<dbReference type="GO" id="GO:0016491">
    <property type="term" value="F:oxidoreductase activity"/>
    <property type="evidence" value="ECO:0007669"/>
    <property type="project" value="InterPro"/>
</dbReference>
<dbReference type="GO" id="GO:0015979">
    <property type="term" value="P:photosynthesis"/>
    <property type="evidence" value="ECO:0007669"/>
    <property type="project" value="UniProtKB-UniRule"/>
</dbReference>
<dbReference type="GO" id="GO:0022904">
    <property type="term" value="P:respiratory electron transport chain"/>
    <property type="evidence" value="ECO:0007669"/>
    <property type="project" value="InterPro"/>
</dbReference>
<dbReference type="CDD" id="cd00284">
    <property type="entry name" value="Cytochrome_b_N"/>
    <property type="match status" value="1"/>
</dbReference>
<dbReference type="FunFam" id="1.20.810.10:FF:000001">
    <property type="entry name" value="Cytochrome b6"/>
    <property type="match status" value="1"/>
</dbReference>
<dbReference type="Gene3D" id="1.20.810.10">
    <property type="entry name" value="Cytochrome Bc1 Complex, Chain C"/>
    <property type="match status" value="1"/>
</dbReference>
<dbReference type="HAMAP" id="MF_00633">
    <property type="entry name" value="Cytb6_f_cytb6"/>
    <property type="match status" value="1"/>
</dbReference>
<dbReference type="InterPro" id="IPR005797">
    <property type="entry name" value="Cyt_b/b6_N"/>
</dbReference>
<dbReference type="InterPro" id="IPR023530">
    <property type="entry name" value="Cyt_B6_PetB"/>
</dbReference>
<dbReference type="InterPro" id="IPR027387">
    <property type="entry name" value="Cytb/b6-like_sf"/>
</dbReference>
<dbReference type="InterPro" id="IPR048259">
    <property type="entry name" value="Cytochrome_b_N_euk/bac"/>
</dbReference>
<dbReference type="InterPro" id="IPR016174">
    <property type="entry name" value="Di-haem_cyt_TM"/>
</dbReference>
<dbReference type="NCBIfam" id="NF002990">
    <property type="entry name" value="PRK03735.1"/>
    <property type="match status" value="1"/>
</dbReference>
<dbReference type="PANTHER" id="PTHR19271">
    <property type="entry name" value="CYTOCHROME B"/>
    <property type="match status" value="1"/>
</dbReference>
<dbReference type="PANTHER" id="PTHR19271:SF16">
    <property type="entry name" value="CYTOCHROME B"/>
    <property type="match status" value="1"/>
</dbReference>
<dbReference type="Pfam" id="PF00033">
    <property type="entry name" value="Cytochrome_B"/>
    <property type="match status" value="1"/>
</dbReference>
<dbReference type="PIRSF" id="PIRSF000032">
    <property type="entry name" value="Cytochrome_b6"/>
    <property type="match status" value="1"/>
</dbReference>
<dbReference type="SUPFAM" id="SSF81342">
    <property type="entry name" value="Transmembrane di-heme cytochromes"/>
    <property type="match status" value="1"/>
</dbReference>
<dbReference type="PROSITE" id="PS51002">
    <property type="entry name" value="CYTB_NTER"/>
    <property type="match status" value="1"/>
</dbReference>
<gene>
    <name evidence="1" type="primary">petB</name>
    <name type="ordered locus">PMT_1649</name>
</gene>
<proteinExistence type="inferred from homology"/>
<organism>
    <name type="scientific">Prochlorococcus marinus (strain MIT 9313)</name>
    <dbReference type="NCBI Taxonomy" id="74547"/>
    <lineage>
        <taxon>Bacteria</taxon>
        <taxon>Bacillati</taxon>
        <taxon>Cyanobacteriota</taxon>
        <taxon>Cyanophyceae</taxon>
        <taxon>Synechococcales</taxon>
        <taxon>Prochlorococcaceae</taxon>
        <taxon>Prochlorococcus</taxon>
    </lineage>
</organism>
<keyword id="KW-0249">Electron transport</keyword>
<keyword id="KW-0349">Heme</keyword>
<keyword id="KW-0408">Iron</keyword>
<keyword id="KW-0472">Membrane</keyword>
<keyword id="KW-0479">Metal-binding</keyword>
<keyword id="KW-0602">Photosynthesis</keyword>
<keyword id="KW-1185">Reference proteome</keyword>
<keyword id="KW-0793">Thylakoid</keyword>
<keyword id="KW-0812">Transmembrane</keyword>
<keyword id="KW-1133">Transmembrane helix</keyword>
<keyword id="KW-0813">Transport</keyword>
<name>CYB6_PROMM</name>